<proteinExistence type="inferred from homology"/>
<gene>
    <name evidence="1" type="primary">psd</name>
    <name type="ordered locus">TC_0072</name>
</gene>
<organism>
    <name type="scientific">Chlamydia muridarum (strain MoPn / Nigg)</name>
    <dbReference type="NCBI Taxonomy" id="243161"/>
    <lineage>
        <taxon>Bacteria</taxon>
        <taxon>Pseudomonadati</taxon>
        <taxon>Chlamydiota</taxon>
        <taxon>Chlamydiia</taxon>
        <taxon>Chlamydiales</taxon>
        <taxon>Chlamydiaceae</taxon>
        <taxon>Chlamydia/Chlamydophila group</taxon>
        <taxon>Chlamydia</taxon>
    </lineage>
</organism>
<name>PSD_CHLMU</name>
<accession>Q9PLM7</accession>
<protein>
    <recommendedName>
        <fullName evidence="1">Phosphatidylserine decarboxylase proenzyme</fullName>
        <ecNumber evidence="1">4.1.1.65</ecNumber>
    </recommendedName>
    <component>
        <recommendedName>
            <fullName evidence="1">Phosphatidylserine decarboxylase alpha chain</fullName>
        </recommendedName>
    </component>
    <component>
        <recommendedName>
            <fullName evidence="1">Phosphatidylserine decarboxylase beta chain</fullName>
        </recommendedName>
    </component>
</protein>
<comment type="function">
    <text evidence="1">Catalyzes the formation of phosphatidylethanolamine (PtdEtn) from phosphatidylserine (PtdSer).</text>
</comment>
<comment type="catalytic activity">
    <reaction evidence="1">
        <text>a 1,2-diacyl-sn-glycero-3-phospho-L-serine + H(+) = a 1,2-diacyl-sn-glycero-3-phosphoethanolamine + CO2</text>
        <dbReference type="Rhea" id="RHEA:20828"/>
        <dbReference type="ChEBI" id="CHEBI:15378"/>
        <dbReference type="ChEBI" id="CHEBI:16526"/>
        <dbReference type="ChEBI" id="CHEBI:57262"/>
        <dbReference type="ChEBI" id="CHEBI:64612"/>
        <dbReference type="EC" id="4.1.1.65"/>
    </reaction>
</comment>
<comment type="cofactor">
    <cofactor evidence="1">
        <name>pyruvate</name>
        <dbReference type="ChEBI" id="CHEBI:15361"/>
    </cofactor>
    <text evidence="1">Binds 1 pyruvoyl group covalently per subunit.</text>
</comment>
<comment type="pathway">
    <text evidence="1">Phospholipid metabolism; phosphatidylethanolamine biosynthesis; phosphatidylethanolamine from CDP-diacylglycerol: step 2/2.</text>
</comment>
<comment type="subunit">
    <text evidence="1">Heterodimer of a large membrane-associated beta subunit and a small pyruvoyl-containing alpha subunit.</text>
</comment>
<comment type="subcellular location">
    <subcellularLocation>
        <location evidence="1">Cell membrane</location>
        <topology evidence="1">Peripheral membrane protein</topology>
    </subcellularLocation>
</comment>
<comment type="PTM">
    <text evidence="1">Is synthesized initially as an inactive proenzyme. Formation of the active enzyme involves a self-maturation process in which the active site pyruvoyl group is generated from an internal serine residue via an autocatalytic post-translational modification. Two non-identical subunits are generated from the proenzyme in this reaction, and the pyruvate is formed at the N-terminus of the alpha chain, which is derived from the carboxyl end of the proenzyme. The autoendoproteolytic cleavage occurs by a canonical serine protease mechanism, in which the side chain hydroxyl group of the serine supplies its oxygen atom to form the C-terminus of the beta chain, while the remainder of the serine residue undergoes an oxidative deamination to produce ammonia and the pyruvoyl prosthetic group on the alpha chain. During this reaction, the Ser that is part of the protease active site of the proenzyme becomes the pyruvoyl prosthetic group, which constitutes an essential element of the active site of the mature decarboxylase.</text>
</comment>
<comment type="similarity">
    <text evidence="1">Belongs to the phosphatidylserine decarboxylase family. PSD-B subfamily. Prokaryotic type II sub-subfamily.</text>
</comment>
<feature type="chain" id="PRO_0000029729" description="Phosphatidylserine decarboxylase beta chain" evidence="1">
    <location>
        <begin position="1"/>
        <end position="259"/>
    </location>
</feature>
<feature type="chain" id="PRO_0000029730" description="Phosphatidylserine decarboxylase alpha chain" evidence="1">
    <location>
        <begin position="260"/>
        <end position="301"/>
    </location>
</feature>
<feature type="active site" description="Charge relay system; for autoendoproteolytic cleavage activity" evidence="1">
    <location>
        <position position="117"/>
    </location>
</feature>
<feature type="active site" description="Charge relay system; for autoendoproteolytic cleavage activity" evidence="1">
    <location>
        <position position="173"/>
    </location>
</feature>
<feature type="active site" description="Charge relay system; for autoendoproteolytic cleavage activity" evidence="1">
    <location>
        <position position="260"/>
    </location>
</feature>
<feature type="active site" description="Schiff-base intermediate with substrate; via pyruvic acid; for decarboxylase activity" evidence="1">
    <location>
        <position position="260"/>
    </location>
</feature>
<feature type="site" description="Cleavage (non-hydrolytic); by autocatalysis" evidence="1">
    <location>
        <begin position="259"/>
        <end position="260"/>
    </location>
</feature>
<feature type="modified residue" description="Pyruvic acid (Ser); by autocatalysis" evidence="1">
    <location>
        <position position="260"/>
    </location>
</feature>
<evidence type="ECO:0000255" key="1">
    <source>
        <dbReference type="HAMAP-Rule" id="MF_00663"/>
    </source>
</evidence>
<sequence length="301" mass="34113">MESQEFLYVNRETGAVEKEPVCCSFAIKFFLETRLGRGVYSFLCKNSLFSRIVGRFQRLRMTRRFIRPFVEKYRICEDEALRPLCDFTSFNDFFIRKLKPEARPICGGSEICVTPADGAYLVFPSIKDVSLFSVKNQLFSLNSLLEDQQLASEYAEGSMAIARLAPFDYHRFHFPVEGIAGTPRLINGYLFSVHPLMLKRNLKVFAENKREITVIESKEFGKVVYIEIGALNVGSIHQTFAPGSYVGKGAEKGFFAFGGSTVVLLFEPQRIIFDADLVHHSAQGLETRCRMGQSLGKRFSS</sequence>
<dbReference type="EC" id="4.1.1.65" evidence="1"/>
<dbReference type="EMBL" id="AE002160">
    <property type="protein sequence ID" value="AAF38954.1"/>
    <property type="molecule type" value="Genomic_DNA"/>
</dbReference>
<dbReference type="PIR" id="D81745">
    <property type="entry name" value="D81745"/>
</dbReference>
<dbReference type="RefSeq" id="WP_010229290.1">
    <property type="nucleotide sequence ID" value="NZ_CP063055.1"/>
</dbReference>
<dbReference type="SMR" id="Q9PLM7"/>
<dbReference type="GeneID" id="1245601"/>
<dbReference type="KEGG" id="cmu:TC_0072"/>
<dbReference type="eggNOG" id="COG0688">
    <property type="taxonomic scope" value="Bacteria"/>
</dbReference>
<dbReference type="HOGENOM" id="CLU_029061_2_2_0"/>
<dbReference type="OrthoDB" id="9802030at2"/>
<dbReference type="UniPathway" id="UPA00558">
    <property type="reaction ID" value="UER00616"/>
</dbReference>
<dbReference type="Proteomes" id="UP000000800">
    <property type="component" value="Chromosome"/>
</dbReference>
<dbReference type="GO" id="GO:0005886">
    <property type="term" value="C:plasma membrane"/>
    <property type="evidence" value="ECO:0007669"/>
    <property type="project" value="UniProtKB-SubCell"/>
</dbReference>
<dbReference type="GO" id="GO:0004609">
    <property type="term" value="F:phosphatidylserine decarboxylase activity"/>
    <property type="evidence" value="ECO:0007669"/>
    <property type="project" value="UniProtKB-UniRule"/>
</dbReference>
<dbReference type="GO" id="GO:0006646">
    <property type="term" value="P:phosphatidylethanolamine biosynthetic process"/>
    <property type="evidence" value="ECO:0007669"/>
    <property type="project" value="UniProtKB-UniRule"/>
</dbReference>
<dbReference type="HAMAP" id="MF_00663">
    <property type="entry name" value="PS_decarb_PSD_B_type2"/>
    <property type="match status" value="1"/>
</dbReference>
<dbReference type="InterPro" id="IPR003817">
    <property type="entry name" value="PS_Dcarbxylase"/>
</dbReference>
<dbReference type="InterPro" id="IPR033177">
    <property type="entry name" value="PSD-B"/>
</dbReference>
<dbReference type="InterPro" id="IPR033179">
    <property type="entry name" value="PSD_type2_pro"/>
</dbReference>
<dbReference type="NCBIfam" id="NF001941">
    <property type="entry name" value="PRK00723.1"/>
    <property type="match status" value="1"/>
</dbReference>
<dbReference type="NCBIfam" id="TIGR00163">
    <property type="entry name" value="PS_decarb"/>
    <property type="match status" value="1"/>
</dbReference>
<dbReference type="PANTHER" id="PTHR10067">
    <property type="entry name" value="PHOSPHATIDYLSERINE DECARBOXYLASE"/>
    <property type="match status" value="1"/>
</dbReference>
<dbReference type="PANTHER" id="PTHR10067:SF17">
    <property type="entry name" value="PHOSPHATIDYLSERINE DECARBOXYLASE PROENZYME 2"/>
    <property type="match status" value="1"/>
</dbReference>
<dbReference type="Pfam" id="PF02666">
    <property type="entry name" value="PS_Dcarbxylase"/>
    <property type="match status" value="1"/>
</dbReference>
<keyword id="KW-1003">Cell membrane</keyword>
<keyword id="KW-0210">Decarboxylase</keyword>
<keyword id="KW-0444">Lipid biosynthesis</keyword>
<keyword id="KW-0443">Lipid metabolism</keyword>
<keyword id="KW-0456">Lyase</keyword>
<keyword id="KW-0472">Membrane</keyword>
<keyword id="KW-0594">Phospholipid biosynthesis</keyword>
<keyword id="KW-1208">Phospholipid metabolism</keyword>
<keyword id="KW-0670">Pyruvate</keyword>
<keyword id="KW-0865">Zymogen</keyword>
<reference key="1">
    <citation type="journal article" date="2000" name="Nucleic Acids Res.">
        <title>Genome sequences of Chlamydia trachomatis MoPn and Chlamydia pneumoniae AR39.</title>
        <authorList>
            <person name="Read T.D."/>
            <person name="Brunham R.C."/>
            <person name="Shen C."/>
            <person name="Gill S.R."/>
            <person name="Heidelberg J.F."/>
            <person name="White O."/>
            <person name="Hickey E.K."/>
            <person name="Peterson J.D."/>
            <person name="Utterback T.R."/>
            <person name="Berry K.J."/>
            <person name="Bass S."/>
            <person name="Linher K.D."/>
            <person name="Weidman J.F."/>
            <person name="Khouri H.M."/>
            <person name="Craven B."/>
            <person name="Bowman C."/>
            <person name="Dodson R.J."/>
            <person name="Gwinn M.L."/>
            <person name="Nelson W.C."/>
            <person name="DeBoy R.T."/>
            <person name="Kolonay J.F."/>
            <person name="McClarty G."/>
            <person name="Salzberg S.L."/>
            <person name="Eisen J.A."/>
            <person name="Fraser C.M."/>
        </authorList>
    </citation>
    <scope>NUCLEOTIDE SEQUENCE [LARGE SCALE GENOMIC DNA]</scope>
    <source>
        <strain>MoPn / Nigg</strain>
    </source>
</reference>